<name>PNP_STRP2</name>
<sequence length="737" mass="81017">MAKQVFQTTFAGRELIVETGQVAKQANGSVVVRYGESTVLTAAVMSKKMATGDFFPLQVNYEEKMYAAGKFPGGFMKREGRPSTDATLTARLIDRPIRPMFAEGFRNEVQVINTVLSYDENASAPMAAMFGSSLALSISDIPFDGPIAGVQVGYVDGQIIINPSQEQAEQSLLELTVAGTKHAINMVESGAKELSEEIMLEALLKGHEAVKELIAFQEEIVAAVGKEKAEVELLHVDAELQAEIIAAYNSDLQKAVQVEEKLAREAATQAVKDQVTAVYEEKYANHEEFDRIMRDVAEILEQMEHAEVRRLITEDKVRPDGRKVDEIRPLDAVVDFLPRVHGSGLFTRGQTQALSVLTLAPMGETQIIDGLDPEYKKRFMHHYNFPQYSVGETGRYGAPGRREIGHGALGERALAQVLPSLEEFPYAIRLVAEVLESNGSSSQASICAGTLALMAGGVPIKAPVAGIAMGLISDGNNYTVLTDIQGLEDHFGDMDFKVAGTRDGITALQMDIKIQGITAEILTEALAQAKKARFEILDVIEATIPEVRPELAPTAPKIDTIKIDVDKIKIVIGKGGETIDKIIAETGVKIDIDEEGNVSIYSSDQDAINRAKEIIAGLVREAKVDEVYRAKVVRIEKFGAFVNLFDKTDALVHISEMAWTRTNRVEDLVEIGDEVDVKVIKIDEKGRIDASMKALLPRPPKPEHDEKGEKSERPHRPRHQKDYKPKKEFTETPKDSE</sequence>
<proteinExistence type="inferred from homology"/>
<keyword id="KW-0963">Cytoplasm</keyword>
<keyword id="KW-0460">Magnesium</keyword>
<keyword id="KW-0479">Metal-binding</keyword>
<keyword id="KW-0548">Nucleotidyltransferase</keyword>
<keyword id="KW-1185">Reference proteome</keyword>
<keyword id="KW-0694">RNA-binding</keyword>
<keyword id="KW-0808">Transferase</keyword>
<gene>
    <name evidence="1" type="primary">pnp</name>
    <name type="ordered locus">SPD_0512</name>
</gene>
<reference key="1">
    <citation type="journal article" date="2007" name="J. Bacteriol.">
        <title>Genome sequence of Avery's virulent serotype 2 strain D39 of Streptococcus pneumoniae and comparison with that of unencapsulated laboratory strain R6.</title>
        <authorList>
            <person name="Lanie J.A."/>
            <person name="Ng W.-L."/>
            <person name="Kazmierczak K.M."/>
            <person name="Andrzejewski T.M."/>
            <person name="Davidsen T.M."/>
            <person name="Wayne K.J."/>
            <person name="Tettelin H."/>
            <person name="Glass J.I."/>
            <person name="Winkler M.E."/>
        </authorList>
    </citation>
    <scope>NUCLEOTIDE SEQUENCE [LARGE SCALE GENOMIC DNA]</scope>
    <source>
        <strain>D39 / NCTC 7466</strain>
    </source>
</reference>
<feature type="chain" id="PRO_0000329871" description="Polyribonucleotide nucleotidyltransferase">
    <location>
        <begin position="1"/>
        <end position="737"/>
    </location>
</feature>
<feature type="domain" description="KH" evidence="1">
    <location>
        <begin position="556"/>
        <end position="615"/>
    </location>
</feature>
<feature type="domain" description="S1 motif" evidence="1">
    <location>
        <begin position="625"/>
        <end position="693"/>
    </location>
</feature>
<feature type="region of interest" description="Disordered" evidence="2">
    <location>
        <begin position="691"/>
        <end position="737"/>
    </location>
</feature>
<feature type="compositionally biased region" description="Basic and acidic residues" evidence="2">
    <location>
        <begin position="700"/>
        <end position="737"/>
    </location>
</feature>
<feature type="binding site" evidence="1">
    <location>
        <position position="489"/>
    </location>
    <ligand>
        <name>Mg(2+)</name>
        <dbReference type="ChEBI" id="CHEBI:18420"/>
    </ligand>
</feature>
<feature type="binding site" evidence="1">
    <location>
        <position position="495"/>
    </location>
    <ligand>
        <name>Mg(2+)</name>
        <dbReference type="ChEBI" id="CHEBI:18420"/>
    </ligand>
</feature>
<organism>
    <name type="scientific">Streptococcus pneumoniae serotype 2 (strain D39 / NCTC 7466)</name>
    <dbReference type="NCBI Taxonomy" id="373153"/>
    <lineage>
        <taxon>Bacteria</taxon>
        <taxon>Bacillati</taxon>
        <taxon>Bacillota</taxon>
        <taxon>Bacilli</taxon>
        <taxon>Lactobacillales</taxon>
        <taxon>Streptococcaceae</taxon>
        <taxon>Streptococcus</taxon>
    </lineage>
</organism>
<dbReference type="EC" id="2.7.7.8" evidence="1"/>
<dbReference type="EMBL" id="CP000410">
    <property type="protein sequence ID" value="ABJ54028.1"/>
    <property type="status" value="ALT_INIT"/>
    <property type="molecule type" value="Genomic_DNA"/>
</dbReference>
<dbReference type="RefSeq" id="WP_001118978.1">
    <property type="nucleotide sequence ID" value="NZ_JAMLJR010000001.1"/>
</dbReference>
<dbReference type="SMR" id="Q04LT4"/>
<dbReference type="PaxDb" id="373153-SPD_0512"/>
<dbReference type="KEGG" id="spd:SPD_0512"/>
<dbReference type="eggNOG" id="COG1185">
    <property type="taxonomic scope" value="Bacteria"/>
</dbReference>
<dbReference type="HOGENOM" id="CLU_004217_2_2_9"/>
<dbReference type="BioCyc" id="SPNE373153:G1G6V-565-MONOMER"/>
<dbReference type="Proteomes" id="UP000001452">
    <property type="component" value="Chromosome"/>
</dbReference>
<dbReference type="GO" id="GO:0005829">
    <property type="term" value="C:cytosol"/>
    <property type="evidence" value="ECO:0007669"/>
    <property type="project" value="TreeGrafter"/>
</dbReference>
<dbReference type="GO" id="GO:0000175">
    <property type="term" value="F:3'-5'-RNA exonuclease activity"/>
    <property type="evidence" value="ECO:0007669"/>
    <property type="project" value="TreeGrafter"/>
</dbReference>
<dbReference type="GO" id="GO:0000287">
    <property type="term" value="F:magnesium ion binding"/>
    <property type="evidence" value="ECO:0007669"/>
    <property type="project" value="UniProtKB-UniRule"/>
</dbReference>
<dbReference type="GO" id="GO:0004654">
    <property type="term" value="F:polyribonucleotide nucleotidyltransferase activity"/>
    <property type="evidence" value="ECO:0007669"/>
    <property type="project" value="UniProtKB-UniRule"/>
</dbReference>
<dbReference type="GO" id="GO:0003723">
    <property type="term" value="F:RNA binding"/>
    <property type="evidence" value="ECO:0007669"/>
    <property type="project" value="UniProtKB-UniRule"/>
</dbReference>
<dbReference type="GO" id="GO:0006402">
    <property type="term" value="P:mRNA catabolic process"/>
    <property type="evidence" value="ECO:0007669"/>
    <property type="project" value="UniProtKB-UniRule"/>
</dbReference>
<dbReference type="GO" id="GO:0006396">
    <property type="term" value="P:RNA processing"/>
    <property type="evidence" value="ECO:0007669"/>
    <property type="project" value="InterPro"/>
</dbReference>
<dbReference type="CDD" id="cd02393">
    <property type="entry name" value="KH-I_PNPase"/>
    <property type="match status" value="1"/>
</dbReference>
<dbReference type="CDD" id="cd11363">
    <property type="entry name" value="RNase_PH_PNPase_1"/>
    <property type="match status" value="1"/>
</dbReference>
<dbReference type="CDD" id="cd11364">
    <property type="entry name" value="RNase_PH_PNPase_2"/>
    <property type="match status" value="1"/>
</dbReference>
<dbReference type="FunFam" id="2.40.50.140:FF:000023">
    <property type="entry name" value="Polyribonucleotide nucleotidyltransferase"/>
    <property type="match status" value="1"/>
</dbReference>
<dbReference type="FunFam" id="3.30.1370.10:FF:000001">
    <property type="entry name" value="Polyribonucleotide nucleotidyltransferase"/>
    <property type="match status" value="1"/>
</dbReference>
<dbReference type="FunFam" id="3.30.230.70:FF:000001">
    <property type="entry name" value="Polyribonucleotide nucleotidyltransferase"/>
    <property type="match status" value="1"/>
</dbReference>
<dbReference type="FunFam" id="3.30.230.70:FF:000002">
    <property type="entry name" value="Polyribonucleotide nucleotidyltransferase"/>
    <property type="match status" value="1"/>
</dbReference>
<dbReference type="Gene3D" id="3.30.230.70">
    <property type="entry name" value="GHMP Kinase, N-terminal domain"/>
    <property type="match status" value="2"/>
</dbReference>
<dbReference type="Gene3D" id="3.30.1370.10">
    <property type="entry name" value="K Homology domain, type 1"/>
    <property type="match status" value="1"/>
</dbReference>
<dbReference type="Gene3D" id="2.40.50.140">
    <property type="entry name" value="Nucleic acid-binding proteins"/>
    <property type="match status" value="1"/>
</dbReference>
<dbReference type="HAMAP" id="MF_01595">
    <property type="entry name" value="PNPase"/>
    <property type="match status" value="1"/>
</dbReference>
<dbReference type="InterPro" id="IPR001247">
    <property type="entry name" value="ExoRNase_PH_dom1"/>
</dbReference>
<dbReference type="InterPro" id="IPR015847">
    <property type="entry name" value="ExoRNase_PH_dom2"/>
</dbReference>
<dbReference type="InterPro" id="IPR036345">
    <property type="entry name" value="ExoRNase_PH_dom2_sf"/>
</dbReference>
<dbReference type="InterPro" id="IPR004087">
    <property type="entry name" value="KH_dom"/>
</dbReference>
<dbReference type="InterPro" id="IPR004088">
    <property type="entry name" value="KH_dom_type_1"/>
</dbReference>
<dbReference type="InterPro" id="IPR036612">
    <property type="entry name" value="KH_dom_type_1_sf"/>
</dbReference>
<dbReference type="InterPro" id="IPR012340">
    <property type="entry name" value="NA-bd_OB-fold"/>
</dbReference>
<dbReference type="InterPro" id="IPR012162">
    <property type="entry name" value="PNPase"/>
</dbReference>
<dbReference type="InterPro" id="IPR027408">
    <property type="entry name" value="PNPase/RNase_PH_dom_sf"/>
</dbReference>
<dbReference type="InterPro" id="IPR015848">
    <property type="entry name" value="PNPase_PH_RNA-bd_bac/org-type"/>
</dbReference>
<dbReference type="InterPro" id="IPR036456">
    <property type="entry name" value="PNPase_PH_RNA-bd_sf"/>
</dbReference>
<dbReference type="InterPro" id="IPR020568">
    <property type="entry name" value="Ribosomal_Su5_D2-typ_SF"/>
</dbReference>
<dbReference type="InterPro" id="IPR003029">
    <property type="entry name" value="S1_domain"/>
</dbReference>
<dbReference type="NCBIfam" id="TIGR03591">
    <property type="entry name" value="polynuc_phos"/>
    <property type="match status" value="1"/>
</dbReference>
<dbReference type="NCBIfam" id="NF008805">
    <property type="entry name" value="PRK11824.1"/>
    <property type="match status" value="1"/>
</dbReference>
<dbReference type="PANTHER" id="PTHR11252">
    <property type="entry name" value="POLYRIBONUCLEOTIDE NUCLEOTIDYLTRANSFERASE"/>
    <property type="match status" value="1"/>
</dbReference>
<dbReference type="PANTHER" id="PTHR11252:SF0">
    <property type="entry name" value="POLYRIBONUCLEOTIDE NUCLEOTIDYLTRANSFERASE 1, MITOCHONDRIAL"/>
    <property type="match status" value="1"/>
</dbReference>
<dbReference type="Pfam" id="PF00013">
    <property type="entry name" value="KH_1"/>
    <property type="match status" value="1"/>
</dbReference>
<dbReference type="Pfam" id="PF03726">
    <property type="entry name" value="PNPase"/>
    <property type="match status" value="1"/>
</dbReference>
<dbReference type="Pfam" id="PF01138">
    <property type="entry name" value="RNase_PH"/>
    <property type="match status" value="2"/>
</dbReference>
<dbReference type="Pfam" id="PF03725">
    <property type="entry name" value="RNase_PH_C"/>
    <property type="match status" value="2"/>
</dbReference>
<dbReference type="Pfam" id="PF00575">
    <property type="entry name" value="S1"/>
    <property type="match status" value="1"/>
</dbReference>
<dbReference type="PIRSF" id="PIRSF005499">
    <property type="entry name" value="PNPase"/>
    <property type="match status" value="1"/>
</dbReference>
<dbReference type="SMART" id="SM00322">
    <property type="entry name" value="KH"/>
    <property type="match status" value="1"/>
</dbReference>
<dbReference type="SMART" id="SM00316">
    <property type="entry name" value="S1"/>
    <property type="match status" value="1"/>
</dbReference>
<dbReference type="SUPFAM" id="SSF54791">
    <property type="entry name" value="Eukaryotic type KH-domain (KH-domain type I)"/>
    <property type="match status" value="1"/>
</dbReference>
<dbReference type="SUPFAM" id="SSF50249">
    <property type="entry name" value="Nucleic acid-binding proteins"/>
    <property type="match status" value="1"/>
</dbReference>
<dbReference type="SUPFAM" id="SSF46915">
    <property type="entry name" value="Polynucleotide phosphorylase/guanosine pentaphosphate synthase (PNPase/GPSI), domain 3"/>
    <property type="match status" value="1"/>
</dbReference>
<dbReference type="SUPFAM" id="SSF55666">
    <property type="entry name" value="Ribonuclease PH domain 2-like"/>
    <property type="match status" value="2"/>
</dbReference>
<dbReference type="SUPFAM" id="SSF54211">
    <property type="entry name" value="Ribosomal protein S5 domain 2-like"/>
    <property type="match status" value="2"/>
</dbReference>
<dbReference type="PROSITE" id="PS50084">
    <property type="entry name" value="KH_TYPE_1"/>
    <property type="match status" value="1"/>
</dbReference>
<dbReference type="PROSITE" id="PS50126">
    <property type="entry name" value="S1"/>
    <property type="match status" value="1"/>
</dbReference>
<comment type="function">
    <text evidence="1">Involved in mRNA degradation. Catalyzes the phosphorolysis of single-stranded polyribonucleotides processively in the 3'- to 5'-direction.</text>
</comment>
<comment type="catalytic activity">
    <reaction evidence="1">
        <text>RNA(n+1) + phosphate = RNA(n) + a ribonucleoside 5'-diphosphate</text>
        <dbReference type="Rhea" id="RHEA:22096"/>
        <dbReference type="Rhea" id="RHEA-COMP:14527"/>
        <dbReference type="Rhea" id="RHEA-COMP:17342"/>
        <dbReference type="ChEBI" id="CHEBI:43474"/>
        <dbReference type="ChEBI" id="CHEBI:57930"/>
        <dbReference type="ChEBI" id="CHEBI:140395"/>
        <dbReference type="EC" id="2.7.7.8"/>
    </reaction>
</comment>
<comment type="cofactor">
    <cofactor evidence="1">
        <name>Mg(2+)</name>
        <dbReference type="ChEBI" id="CHEBI:18420"/>
    </cofactor>
</comment>
<comment type="subcellular location">
    <subcellularLocation>
        <location evidence="1">Cytoplasm</location>
    </subcellularLocation>
</comment>
<comment type="similarity">
    <text evidence="1">Belongs to the polyribonucleotide nucleotidyltransferase family.</text>
</comment>
<comment type="sequence caution" evidence="3">
    <conflict type="erroneous initiation">
        <sequence resource="EMBL-CDS" id="ABJ54028"/>
    </conflict>
</comment>
<protein>
    <recommendedName>
        <fullName evidence="1">Polyribonucleotide nucleotidyltransferase</fullName>
        <ecNumber evidence="1">2.7.7.8</ecNumber>
    </recommendedName>
    <alternativeName>
        <fullName evidence="1">Polynucleotide phosphorylase</fullName>
        <shortName evidence="1">PNPase</shortName>
    </alternativeName>
</protein>
<accession>Q04LT4</accession>
<evidence type="ECO:0000255" key="1">
    <source>
        <dbReference type="HAMAP-Rule" id="MF_01595"/>
    </source>
</evidence>
<evidence type="ECO:0000256" key="2">
    <source>
        <dbReference type="SAM" id="MobiDB-lite"/>
    </source>
</evidence>
<evidence type="ECO:0000305" key="3"/>